<keyword id="KW-1185">Reference proteome</keyword>
<keyword id="KW-0687">Ribonucleoprotein</keyword>
<keyword id="KW-0689">Ribosomal protein</keyword>
<keyword id="KW-0694">RNA-binding</keyword>
<keyword id="KW-0699">rRNA-binding</keyword>
<reference key="1">
    <citation type="journal article" date="2000" name="Science">
        <title>Complete genome sequence of Neisseria meningitidis serogroup B strain MC58.</title>
        <authorList>
            <person name="Tettelin H."/>
            <person name="Saunders N.J."/>
            <person name="Heidelberg J.F."/>
            <person name="Jeffries A.C."/>
            <person name="Nelson K.E."/>
            <person name="Eisen J.A."/>
            <person name="Ketchum K.A."/>
            <person name="Hood D.W."/>
            <person name="Peden J.F."/>
            <person name="Dodson R.J."/>
            <person name="Nelson W.C."/>
            <person name="Gwinn M.L."/>
            <person name="DeBoy R.T."/>
            <person name="Peterson J.D."/>
            <person name="Hickey E.K."/>
            <person name="Haft D.H."/>
            <person name="Salzberg S.L."/>
            <person name="White O."/>
            <person name="Fleischmann R.D."/>
            <person name="Dougherty B.A."/>
            <person name="Mason T.M."/>
            <person name="Ciecko A."/>
            <person name="Parksey D.S."/>
            <person name="Blair E."/>
            <person name="Cittone H."/>
            <person name="Clark E.B."/>
            <person name="Cotton M.D."/>
            <person name="Utterback T.R."/>
            <person name="Khouri H.M."/>
            <person name="Qin H."/>
            <person name="Vamathevan J.J."/>
            <person name="Gill J."/>
            <person name="Scarlato V."/>
            <person name="Masignani V."/>
            <person name="Pizza M."/>
            <person name="Grandi G."/>
            <person name="Sun L."/>
            <person name="Smith H.O."/>
            <person name="Fraser C.M."/>
            <person name="Moxon E.R."/>
            <person name="Rappuoli R."/>
            <person name="Venter J.C."/>
        </authorList>
    </citation>
    <scope>NUCLEOTIDE SEQUENCE [LARGE SCALE GENOMIC DNA]</scope>
    <source>
        <strain>ATCC BAA-335 / MC58</strain>
    </source>
</reference>
<feature type="chain" id="PRO_0000126452" description="Small ribosomal subunit protein uS8">
    <location>
        <begin position="1"/>
        <end position="130"/>
    </location>
</feature>
<evidence type="ECO:0000255" key="1">
    <source>
        <dbReference type="HAMAP-Rule" id="MF_01302"/>
    </source>
</evidence>
<evidence type="ECO:0000305" key="2"/>
<accession>P66628</accession>
<accession>Q9JR58</accession>
<sequence>MSMHDPISDMLTRIRNAQRANKAAVAMPSSKLKCAIAKVLKEEGYIEDFAVSSDVKSILEIQLKYYAGRPVIEQIKRVSRPGLRIYKASSEIPSVMNGLGIAIVSTSKGVMTDRKARSQGVGGELLCIVA</sequence>
<protein>
    <recommendedName>
        <fullName evidence="1">Small ribosomal subunit protein uS8</fullName>
    </recommendedName>
    <alternativeName>
        <fullName evidence="2">30S ribosomal protein S8</fullName>
    </alternativeName>
</protein>
<gene>
    <name evidence="1" type="primary">rpsH</name>
    <name type="ordered locus">NMB0156</name>
</gene>
<organism>
    <name type="scientific">Neisseria meningitidis serogroup B (strain ATCC BAA-335 / MC58)</name>
    <dbReference type="NCBI Taxonomy" id="122586"/>
    <lineage>
        <taxon>Bacteria</taxon>
        <taxon>Pseudomonadati</taxon>
        <taxon>Pseudomonadota</taxon>
        <taxon>Betaproteobacteria</taxon>
        <taxon>Neisseriales</taxon>
        <taxon>Neisseriaceae</taxon>
        <taxon>Neisseria</taxon>
    </lineage>
</organism>
<name>RS8_NEIMB</name>
<comment type="function">
    <text evidence="1">One of the primary rRNA binding proteins, it binds directly to 16S rRNA central domain where it helps coordinate assembly of the platform of the 30S subunit.</text>
</comment>
<comment type="subunit">
    <text evidence="1">Part of the 30S ribosomal subunit. Contacts proteins S5 and S12.</text>
</comment>
<comment type="similarity">
    <text evidence="1">Belongs to the universal ribosomal protein uS8 family.</text>
</comment>
<proteinExistence type="inferred from homology"/>
<dbReference type="EMBL" id="AE002098">
    <property type="protein sequence ID" value="AAF40614.1"/>
    <property type="molecule type" value="Genomic_DNA"/>
</dbReference>
<dbReference type="PIR" id="F81232">
    <property type="entry name" value="F81232"/>
</dbReference>
<dbReference type="RefSeq" id="NP_273214.1">
    <property type="nucleotide sequence ID" value="NC_003112.2"/>
</dbReference>
<dbReference type="RefSeq" id="WP_002215438.1">
    <property type="nucleotide sequence ID" value="NC_003112.2"/>
</dbReference>
<dbReference type="SMR" id="P66628"/>
<dbReference type="FunCoup" id="P66628">
    <property type="interactions" value="518"/>
</dbReference>
<dbReference type="STRING" id="122586.NMB0156"/>
<dbReference type="PaxDb" id="122586-NMB0156"/>
<dbReference type="GeneID" id="93387231"/>
<dbReference type="KEGG" id="nme:NMB0156"/>
<dbReference type="PATRIC" id="fig|122586.8.peg.197"/>
<dbReference type="HOGENOM" id="CLU_098428_0_0_4"/>
<dbReference type="InParanoid" id="P66628"/>
<dbReference type="OrthoDB" id="9802617at2"/>
<dbReference type="Proteomes" id="UP000000425">
    <property type="component" value="Chromosome"/>
</dbReference>
<dbReference type="GO" id="GO:0022627">
    <property type="term" value="C:cytosolic small ribosomal subunit"/>
    <property type="evidence" value="ECO:0000318"/>
    <property type="project" value="GO_Central"/>
</dbReference>
<dbReference type="GO" id="GO:0019843">
    <property type="term" value="F:rRNA binding"/>
    <property type="evidence" value="ECO:0007669"/>
    <property type="project" value="UniProtKB-UniRule"/>
</dbReference>
<dbReference type="GO" id="GO:0003735">
    <property type="term" value="F:structural constituent of ribosome"/>
    <property type="evidence" value="ECO:0000318"/>
    <property type="project" value="GO_Central"/>
</dbReference>
<dbReference type="GO" id="GO:0006412">
    <property type="term" value="P:translation"/>
    <property type="evidence" value="ECO:0007669"/>
    <property type="project" value="UniProtKB-UniRule"/>
</dbReference>
<dbReference type="FunFam" id="3.30.1370.30:FF:000003">
    <property type="entry name" value="30S ribosomal protein S8"/>
    <property type="match status" value="1"/>
</dbReference>
<dbReference type="FunFam" id="3.30.1490.10:FF:000001">
    <property type="entry name" value="30S ribosomal protein S8"/>
    <property type="match status" value="1"/>
</dbReference>
<dbReference type="Gene3D" id="3.30.1370.30">
    <property type="match status" value="1"/>
</dbReference>
<dbReference type="Gene3D" id="3.30.1490.10">
    <property type="match status" value="1"/>
</dbReference>
<dbReference type="HAMAP" id="MF_01302_B">
    <property type="entry name" value="Ribosomal_uS8_B"/>
    <property type="match status" value="1"/>
</dbReference>
<dbReference type="InterPro" id="IPR000630">
    <property type="entry name" value="Ribosomal_uS8"/>
</dbReference>
<dbReference type="InterPro" id="IPR047863">
    <property type="entry name" value="Ribosomal_uS8_CS"/>
</dbReference>
<dbReference type="InterPro" id="IPR035987">
    <property type="entry name" value="Ribosomal_uS8_sf"/>
</dbReference>
<dbReference type="NCBIfam" id="NF001109">
    <property type="entry name" value="PRK00136.1"/>
    <property type="match status" value="1"/>
</dbReference>
<dbReference type="PANTHER" id="PTHR11758">
    <property type="entry name" value="40S RIBOSOMAL PROTEIN S15A"/>
    <property type="match status" value="1"/>
</dbReference>
<dbReference type="Pfam" id="PF00410">
    <property type="entry name" value="Ribosomal_S8"/>
    <property type="match status" value="1"/>
</dbReference>
<dbReference type="SUPFAM" id="SSF56047">
    <property type="entry name" value="Ribosomal protein S8"/>
    <property type="match status" value="1"/>
</dbReference>
<dbReference type="PROSITE" id="PS00053">
    <property type="entry name" value="RIBOSOMAL_S8"/>
    <property type="match status" value="1"/>
</dbReference>